<feature type="chain" id="PRO_1000055253" description="Large ribosomal subunit protein uL6">
    <location>
        <begin position="1"/>
        <end position="178"/>
    </location>
</feature>
<proteinExistence type="inferred from homology"/>
<sequence length="178" mass="19038">MSRIGNKTITLPADVTVSQEGAVVTVKGPKGELSREIVSAITMTVEGNEVSFSRDSDDSKTRALHGTTRANVANMVEGVSEGFTKTLKLVGVGYRAAKSGSKLTLSVGYSHPVDFEDREELSVEVPDALTIKVSGISKQKVGDLAAEIRAVRSPEPYKGKGIRYEGEVVRRKEGKTGK</sequence>
<dbReference type="EMBL" id="CP000414">
    <property type="protein sequence ID" value="ABJ61341.1"/>
    <property type="molecule type" value="Genomic_DNA"/>
</dbReference>
<dbReference type="RefSeq" id="WP_002816022.1">
    <property type="nucleotide sequence ID" value="NC_008531.1"/>
</dbReference>
<dbReference type="SMR" id="Q03ZN1"/>
<dbReference type="EnsemblBacteria" id="ABJ61341">
    <property type="protein sequence ID" value="ABJ61341"/>
    <property type="gene ID" value="LEUM_0210"/>
</dbReference>
<dbReference type="GeneID" id="29577741"/>
<dbReference type="KEGG" id="lme:LEUM_0210"/>
<dbReference type="eggNOG" id="COG0097">
    <property type="taxonomic scope" value="Bacteria"/>
</dbReference>
<dbReference type="HOGENOM" id="CLU_065464_1_2_9"/>
<dbReference type="Proteomes" id="UP000000362">
    <property type="component" value="Chromosome"/>
</dbReference>
<dbReference type="GO" id="GO:0022625">
    <property type="term" value="C:cytosolic large ribosomal subunit"/>
    <property type="evidence" value="ECO:0007669"/>
    <property type="project" value="TreeGrafter"/>
</dbReference>
<dbReference type="GO" id="GO:0019843">
    <property type="term" value="F:rRNA binding"/>
    <property type="evidence" value="ECO:0007669"/>
    <property type="project" value="UniProtKB-UniRule"/>
</dbReference>
<dbReference type="GO" id="GO:0003735">
    <property type="term" value="F:structural constituent of ribosome"/>
    <property type="evidence" value="ECO:0007669"/>
    <property type="project" value="InterPro"/>
</dbReference>
<dbReference type="GO" id="GO:0002181">
    <property type="term" value="P:cytoplasmic translation"/>
    <property type="evidence" value="ECO:0007669"/>
    <property type="project" value="TreeGrafter"/>
</dbReference>
<dbReference type="FunFam" id="3.90.930.12:FF:000001">
    <property type="entry name" value="50S ribosomal protein L6"/>
    <property type="match status" value="1"/>
</dbReference>
<dbReference type="FunFam" id="3.90.930.12:FF:000002">
    <property type="entry name" value="50S ribosomal protein L6"/>
    <property type="match status" value="1"/>
</dbReference>
<dbReference type="Gene3D" id="3.90.930.12">
    <property type="entry name" value="Ribosomal protein L6, alpha-beta domain"/>
    <property type="match status" value="2"/>
</dbReference>
<dbReference type="HAMAP" id="MF_01365_B">
    <property type="entry name" value="Ribosomal_uL6_B"/>
    <property type="match status" value="1"/>
</dbReference>
<dbReference type="InterPro" id="IPR000702">
    <property type="entry name" value="Ribosomal_uL6-like"/>
</dbReference>
<dbReference type="InterPro" id="IPR036789">
    <property type="entry name" value="Ribosomal_uL6-like_a/b-dom_sf"/>
</dbReference>
<dbReference type="InterPro" id="IPR020040">
    <property type="entry name" value="Ribosomal_uL6_a/b-dom"/>
</dbReference>
<dbReference type="InterPro" id="IPR019906">
    <property type="entry name" value="Ribosomal_uL6_bac-type"/>
</dbReference>
<dbReference type="InterPro" id="IPR002358">
    <property type="entry name" value="Ribosomal_uL6_CS"/>
</dbReference>
<dbReference type="NCBIfam" id="TIGR03654">
    <property type="entry name" value="L6_bact"/>
    <property type="match status" value="1"/>
</dbReference>
<dbReference type="PANTHER" id="PTHR11655">
    <property type="entry name" value="60S/50S RIBOSOMAL PROTEIN L6/L9"/>
    <property type="match status" value="1"/>
</dbReference>
<dbReference type="PANTHER" id="PTHR11655:SF14">
    <property type="entry name" value="LARGE RIBOSOMAL SUBUNIT PROTEIN UL6M"/>
    <property type="match status" value="1"/>
</dbReference>
<dbReference type="Pfam" id="PF00347">
    <property type="entry name" value="Ribosomal_L6"/>
    <property type="match status" value="2"/>
</dbReference>
<dbReference type="PIRSF" id="PIRSF002162">
    <property type="entry name" value="Ribosomal_L6"/>
    <property type="match status" value="1"/>
</dbReference>
<dbReference type="PRINTS" id="PR00059">
    <property type="entry name" value="RIBOSOMALL6"/>
</dbReference>
<dbReference type="SUPFAM" id="SSF56053">
    <property type="entry name" value="Ribosomal protein L6"/>
    <property type="match status" value="2"/>
</dbReference>
<dbReference type="PROSITE" id="PS00525">
    <property type="entry name" value="RIBOSOMAL_L6_1"/>
    <property type="match status" value="1"/>
</dbReference>
<reference key="1">
    <citation type="journal article" date="2006" name="Proc. Natl. Acad. Sci. U.S.A.">
        <title>Comparative genomics of the lactic acid bacteria.</title>
        <authorList>
            <person name="Makarova K.S."/>
            <person name="Slesarev A."/>
            <person name="Wolf Y.I."/>
            <person name="Sorokin A."/>
            <person name="Mirkin B."/>
            <person name="Koonin E.V."/>
            <person name="Pavlov A."/>
            <person name="Pavlova N."/>
            <person name="Karamychev V."/>
            <person name="Polouchine N."/>
            <person name="Shakhova V."/>
            <person name="Grigoriev I."/>
            <person name="Lou Y."/>
            <person name="Rohksar D."/>
            <person name="Lucas S."/>
            <person name="Huang K."/>
            <person name="Goodstein D.M."/>
            <person name="Hawkins T."/>
            <person name="Plengvidhya V."/>
            <person name="Welker D."/>
            <person name="Hughes J."/>
            <person name="Goh Y."/>
            <person name="Benson A."/>
            <person name="Baldwin K."/>
            <person name="Lee J.-H."/>
            <person name="Diaz-Muniz I."/>
            <person name="Dosti B."/>
            <person name="Smeianov V."/>
            <person name="Wechter W."/>
            <person name="Barabote R."/>
            <person name="Lorca G."/>
            <person name="Altermann E."/>
            <person name="Barrangou R."/>
            <person name="Ganesan B."/>
            <person name="Xie Y."/>
            <person name="Rawsthorne H."/>
            <person name="Tamir D."/>
            <person name="Parker C."/>
            <person name="Breidt F."/>
            <person name="Broadbent J.R."/>
            <person name="Hutkins R."/>
            <person name="O'Sullivan D."/>
            <person name="Steele J."/>
            <person name="Unlu G."/>
            <person name="Saier M.H. Jr."/>
            <person name="Klaenhammer T."/>
            <person name="Richardson P."/>
            <person name="Kozyavkin S."/>
            <person name="Weimer B.C."/>
            <person name="Mills D.A."/>
        </authorList>
    </citation>
    <scope>NUCLEOTIDE SEQUENCE [LARGE SCALE GENOMIC DNA]</scope>
    <source>
        <strain>ATCC 8293 / DSM 20343 / BCRC 11652 / CCM 1803 / JCM 6124 / NCDO 523 / NBRC 100496 / NCIMB 8023 / NCTC 12954 / NRRL B-1118 / 37Y</strain>
    </source>
</reference>
<accession>Q03ZN1</accession>
<gene>
    <name evidence="1" type="primary">rplF</name>
    <name type="ordered locus">LEUM_0210</name>
</gene>
<organism>
    <name type="scientific">Leuconostoc mesenteroides subsp. mesenteroides (strain ATCC 8293 / DSM 20343 / BCRC 11652 / CCM 1803 / JCM 6124 / NCDO 523 / NBRC 100496 / NCIMB 8023 / NCTC 12954 / NRRL B-1118 / 37Y)</name>
    <dbReference type="NCBI Taxonomy" id="203120"/>
    <lineage>
        <taxon>Bacteria</taxon>
        <taxon>Bacillati</taxon>
        <taxon>Bacillota</taxon>
        <taxon>Bacilli</taxon>
        <taxon>Lactobacillales</taxon>
        <taxon>Lactobacillaceae</taxon>
        <taxon>Leuconostoc</taxon>
    </lineage>
</organism>
<keyword id="KW-1185">Reference proteome</keyword>
<keyword id="KW-0687">Ribonucleoprotein</keyword>
<keyword id="KW-0689">Ribosomal protein</keyword>
<keyword id="KW-0694">RNA-binding</keyword>
<keyword id="KW-0699">rRNA-binding</keyword>
<comment type="function">
    <text evidence="1">This protein binds to the 23S rRNA, and is important in its secondary structure. It is located near the subunit interface in the base of the L7/L12 stalk, and near the tRNA binding site of the peptidyltransferase center.</text>
</comment>
<comment type="subunit">
    <text evidence="1">Part of the 50S ribosomal subunit.</text>
</comment>
<comment type="similarity">
    <text evidence="1">Belongs to the universal ribosomal protein uL6 family.</text>
</comment>
<evidence type="ECO:0000255" key="1">
    <source>
        <dbReference type="HAMAP-Rule" id="MF_01365"/>
    </source>
</evidence>
<evidence type="ECO:0000305" key="2"/>
<protein>
    <recommendedName>
        <fullName evidence="1">Large ribosomal subunit protein uL6</fullName>
    </recommendedName>
    <alternativeName>
        <fullName evidence="2">50S ribosomal protein L6</fullName>
    </alternativeName>
</protein>
<name>RL6_LEUMM</name>